<reference key="1">
    <citation type="journal article" date="2004" name="Genome Res.">
        <title>The status, quality, and expansion of the NIH full-length cDNA project: the Mammalian Gene Collection (MGC).</title>
        <authorList>
            <consortium name="The MGC Project Team"/>
        </authorList>
    </citation>
    <scope>NUCLEOTIDE SEQUENCE [LARGE SCALE MRNA]</scope>
    <source>
        <tissue>Prostate</tissue>
    </source>
</reference>
<comment type="function">
    <text evidence="1">Required for endoplasmic reticulum integrity. Regulates the distribution of TOR1A between the endoplasmic reticulum and the nuclear envelope as well as induces TOR1A, TOR1B and TOR3A ATPase activity (By similarity).</text>
</comment>
<comment type="subunit">
    <text evidence="1">Interacts with TOR1A and TOR1B (ATP-bound).</text>
</comment>
<comment type="subcellular location">
    <subcellularLocation>
        <location evidence="1">Endoplasmic reticulum membrane</location>
        <topology evidence="1">Single-pass membrane protein</topology>
    </subcellularLocation>
    <subcellularLocation>
        <location evidence="1">Nucleus envelope</location>
    </subcellularLocation>
</comment>
<comment type="similarity">
    <text evidence="5">Belongs to the TOR1AIP family.</text>
</comment>
<gene>
    <name type="primary">Tor1aip2</name>
</gene>
<feature type="chain" id="PRO_0000228840" description="Torsin-1A-interacting protein 2">
    <location>
        <begin position="1"/>
        <end position="578"/>
    </location>
</feature>
<feature type="topological domain" description="Cytoplasmic" evidence="3">
    <location>
        <begin position="1"/>
        <end position="325"/>
    </location>
</feature>
<feature type="transmembrane region" description="Helical" evidence="3">
    <location>
        <begin position="326"/>
        <end position="343"/>
    </location>
</feature>
<feature type="topological domain" description="Lumenal" evidence="3">
    <location>
        <begin position="344"/>
        <end position="578"/>
    </location>
</feature>
<feature type="region of interest" description="Disordered" evidence="4">
    <location>
        <begin position="1"/>
        <end position="255"/>
    </location>
</feature>
<feature type="region of interest" description="Disordered" evidence="4">
    <location>
        <begin position="267"/>
        <end position="287"/>
    </location>
</feature>
<feature type="region of interest" description="Interaction with TOR1A" evidence="1">
    <location>
        <begin position="344"/>
        <end position="578"/>
    </location>
</feature>
<feature type="compositionally biased region" description="Polar residues" evidence="4">
    <location>
        <begin position="1"/>
        <end position="14"/>
    </location>
</feature>
<feature type="compositionally biased region" description="Polar residues" evidence="4">
    <location>
        <begin position="23"/>
        <end position="56"/>
    </location>
</feature>
<feature type="compositionally biased region" description="Basic and acidic residues" evidence="4">
    <location>
        <begin position="58"/>
        <end position="101"/>
    </location>
</feature>
<feature type="compositionally biased region" description="Basic and acidic residues" evidence="4">
    <location>
        <begin position="108"/>
        <end position="120"/>
    </location>
</feature>
<feature type="compositionally biased region" description="Low complexity" evidence="4">
    <location>
        <begin position="144"/>
        <end position="153"/>
    </location>
</feature>
<feature type="compositionally biased region" description="Low complexity" evidence="4">
    <location>
        <begin position="186"/>
        <end position="195"/>
    </location>
</feature>
<feature type="compositionally biased region" description="Low complexity" evidence="4">
    <location>
        <begin position="220"/>
        <end position="229"/>
    </location>
</feature>
<feature type="compositionally biased region" description="Low complexity" evidence="4">
    <location>
        <begin position="241"/>
        <end position="250"/>
    </location>
</feature>
<feature type="compositionally biased region" description="Polar residues" evidence="4">
    <location>
        <begin position="267"/>
        <end position="283"/>
    </location>
</feature>
<feature type="modified residue" description="Phosphoserine" evidence="2">
    <location>
        <position position="24"/>
    </location>
</feature>
<feature type="modified residue" description="Phosphoserine" evidence="2">
    <location>
        <position position="104"/>
    </location>
</feature>
<feature type="modified residue" description="Phosphoserine" evidence="2">
    <location>
        <position position="131"/>
    </location>
</feature>
<feature type="modified residue" description="Phosphoserine" evidence="2">
    <location>
        <position position="271"/>
    </location>
</feature>
<feature type="modified residue" description="Phosphothreonine" evidence="2">
    <location>
        <position position="301"/>
    </location>
</feature>
<feature type="glycosylation site" description="N-linked (GlcNAc...) asparagine" evidence="3">
    <location>
        <position position="394"/>
    </location>
</feature>
<protein>
    <recommendedName>
        <fullName>Torsin-1A-interacting protein 2</fullName>
    </recommendedName>
</protein>
<evidence type="ECO:0000250" key="1"/>
<evidence type="ECO:0000250" key="2">
    <source>
        <dbReference type="UniProtKB" id="Q8NFQ8"/>
    </source>
</evidence>
<evidence type="ECO:0000255" key="3"/>
<evidence type="ECO:0000256" key="4">
    <source>
        <dbReference type="SAM" id="MobiDB-lite"/>
    </source>
</evidence>
<evidence type="ECO:0000305" key="5"/>
<accession>Q6P752</accession>
<organism>
    <name type="scientific">Rattus norvegicus</name>
    <name type="common">Rat</name>
    <dbReference type="NCBI Taxonomy" id="10116"/>
    <lineage>
        <taxon>Eukaryota</taxon>
        <taxon>Metazoa</taxon>
        <taxon>Chordata</taxon>
        <taxon>Craniata</taxon>
        <taxon>Vertebrata</taxon>
        <taxon>Euteleostomi</taxon>
        <taxon>Mammalia</taxon>
        <taxon>Eutheria</taxon>
        <taxon>Euarchontoglires</taxon>
        <taxon>Glires</taxon>
        <taxon>Rodentia</taxon>
        <taxon>Myomorpha</taxon>
        <taxon>Muroidea</taxon>
        <taxon>Muridae</taxon>
        <taxon>Murinae</taxon>
        <taxon>Rattus</taxon>
    </lineage>
</organism>
<proteinExistence type="evidence at transcript level"/>
<dbReference type="EMBL" id="BC061831">
    <property type="protein sequence ID" value="AAH61831.1"/>
    <property type="molecule type" value="mRNA"/>
</dbReference>
<dbReference type="RefSeq" id="NP_954531.1">
    <property type="nucleotide sequence ID" value="NM_199100.4"/>
</dbReference>
<dbReference type="RefSeq" id="XP_006250105.1">
    <property type="nucleotide sequence ID" value="XM_006250043.5"/>
</dbReference>
<dbReference type="RefSeq" id="XP_006250106.1">
    <property type="nucleotide sequence ID" value="XM_006250044.3"/>
</dbReference>
<dbReference type="RefSeq" id="XP_006250107.1">
    <property type="nucleotide sequence ID" value="XM_006250045.5"/>
</dbReference>
<dbReference type="RefSeq" id="XP_038946663.1">
    <property type="nucleotide sequence ID" value="XM_039090735.2"/>
</dbReference>
<dbReference type="RefSeq" id="XP_038946664.1">
    <property type="nucleotide sequence ID" value="XM_039090736.2"/>
</dbReference>
<dbReference type="SMR" id="Q6P752"/>
<dbReference type="BioGRID" id="258008">
    <property type="interactions" value="1"/>
</dbReference>
<dbReference type="FunCoup" id="Q6P752">
    <property type="interactions" value="964"/>
</dbReference>
<dbReference type="STRING" id="10116.ENSRNOP00000039176"/>
<dbReference type="GlyCosmos" id="Q6P752">
    <property type="glycosylation" value="1 site, No reported glycans"/>
</dbReference>
<dbReference type="GlyGen" id="Q6P752">
    <property type="glycosylation" value="2 sites"/>
</dbReference>
<dbReference type="iPTMnet" id="Q6P752"/>
<dbReference type="PhosphoSitePlus" id="Q6P752"/>
<dbReference type="PaxDb" id="10116-ENSRNOP00000039176"/>
<dbReference type="Ensembl" id="ENSRNOT00000050734.5">
    <property type="protein sequence ID" value="ENSRNOP00000039176.3"/>
    <property type="gene ID" value="ENSRNOG00000024849.6"/>
</dbReference>
<dbReference type="GeneID" id="304881"/>
<dbReference type="KEGG" id="rno:304881"/>
<dbReference type="UCSC" id="RGD:735059">
    <property type="organism name" value="rat"/>
</dbReference>
<dbReference type="AGR" id="RGD:735059"/>
<dbReference type="CTD" id="163590"/>
<dbReference type="RGD" id="735059">
    <property type="gene designation" value="Tor1aip2"/>
</dbReference>
<dbReference type="eggNOG" id="ENOG502QUV7">
    <property type="taxonomic scope" value="Eukaryota"/>
</dbReference>
<dbReference type="GeneTree" id="ENSGT00390000012166"/>
<dbReference type="HOGENOM" id="CLU_034263_1_1_1"/>
<dbReference type="InParanoid" id="Q6P752"/>
<dbReference type="OMA" id="ANTCLSA"/>
<dbReference type="OrthoDB" id="9816117at2759"/>
<dbReference type="PhylomeDB" id="Q6P752"/>
<dbReference type="TreeFam" id="TF329438"/>
<dbReference type="Proteomes" id="UP000002494">
    <property type="component" value="Chromosome 13"/>
</dbReference>
<dbReference type="Bgee" id="ENSRNOG00000024849">
    <property type="expression patterns" value="Expressed in jejunum and 19 other cell types or tissues"/>
</dbReference>
<dbReference type="GO" id="GO:0005783">
    <property type="term" value="C:endoplasmic reticulum"/>
    <property type="evidence" value="ECO:0000250"/>
    <property type="project" value="UniProtKB"/>
</dbReference>
<dbReference type="GO" id="GO:0005789">
    <property type="term" value="C:endoplasmic reticulum membrane"/>
    <property type="evidence" value="ECO:0007669"/>
    <property type="project" value="UniProtKB-SubCell"/>
</dbReference>
<dbReference type="GO" id="GO:0016020">
    <property type="term" value="C:membrane"/>
    <property type="evidence" value="ECO:0000318"/>
    <property type="project" value="GO_Central"/>
</dbReference>
<dbReference type="GO" id="GO:0005635">
    <property type="term" value="C:nuclear envelope"/>
    <property type="evidence" value="ECO:0007669"/>
    <property type="project" value="UniProtKB-SubCell"/>
</dbReference>
<dbReference type="GO" id="GO:0001671">
    <property type="term" value="F:ATPase activator activity"/>
    <property type="evidence" value="ECO:0000250"/>
    <property type="project" value="UniProtKB"/>
</dbReference>
<dbReference type="GO" id="GO:0051117">
    <property type="term" value="F:ATPase binding"/>
    <property type="evidence" value="ECO:0000266"/>
    <property type="project" value="RGD"/>
</dbReference>
<dbReference type="GO" id="GO:0007029">
    <property type="term" value="P:endoplasmic reticulum organization"/>
    <property type="evidence" value="ECO:0000250"/>
    <property type="project" value="UniProtKB"/>
</dbReference>
<dbReference type="GO" id="GO:0061024">
    <property type="term" value="P:membrane organization"/>
    <property type="evidence" value="ECO:0000318"/>
    <property type="project" value="GO_Central"/>
</dbReference>
<dbReference type="GO" id="GO:0032781">
    <property type="term" value="P:positive regulation of ATP-dependent activity"/>
    <property type="evidence" value="ECO:0000250"/>
    <property type="project" value="UniProtKB"/>
</dbReference>
<dbReference type="GO" id="GO:0090435">
    <property type="term" value="P:protein localization to nuclear envelope"/>
    <property type="evidence" value="ECO:0000266"/>
    <property type="project" value="RGD"/>
</dbReference>
<dbReference type="Gene3D" id="3.40.50.12190">
    <property type="match status" value="1"/>
</dbReference>
<dbReference type="InterPro" id="IPR038599">
    <property type="entry name" value="LAP1C-like_C_sf"/>
</dbReference>
<dbReference type="InterPro" id="IPR008662">
    <property type="entry name" value="TOIP1/2"/>
</dbReference>
<dbReference type="InterPro" id="IPR046753">
    <property type="entry name" value="TOIP1/2_C"/>
</dbReference>
<dbReference type="InterPro" id="IPR046754">
    <property type="entry name" value="TOIP1/2_N"/>
</dbReference>
<dbReference type="PANTHER" id="PTHR18843">
    <property type="entry name" value="TORSIN-1A-INTERACTING PROTEIN"/>
    <property type="match status" value="1"/>
</dbReference>
<dbReference type="PANTHER" id="PTHR18843:SF2">
    <property type="entry name" value="TORSIN-1A-INTERACTING PROTEIN 2"/>
    <property type="match status" value="1"/>
</dbReference>
<dbReference type="Pfam" id="PF05609">
    <property type="entry name" value="LAP1_C"/>
    <property type="match status" value="1"/>
</dbReference>
<dbReference type="Pfam" id="PF20443">
    <property type="entry name" value="LAP1_N"/>
    <property type="match status" value="2"/>
</dbReference>
<sequence length="578" mass="61698">MSQTLKSQDTNMSDSGYRDPVEDSQNVLGNDPSVNSQAQDPIVTPSNTVEAQTLHPTSDLKEDHHEIGAKGQEHADTGDRAESSEEPALEKPPLDKAELERSPSSQDTEQRHHPYSEHVGGDTLVLDPNYSQSDLGGRADAHLESSSAAPTEGAGEGGEAGAHLESSCAALPVGADEGGRANAHLESSSAAPTEGAGEGGEADVHLESSSAVPPEEAHLESSSAAPSEGAGEGGEADAHLESSSAAPSEGAGEGGETAQNLLAVDSTDAQSPCHSSAGPGSQDSLRRRLPVTEAERHEEETQLVTEKEEVAQETLRKTEKKSLWTYGSMFLGCLIVAVVLSSVNSYYSSPAQQVPQNPALEAFLAQFSQLREKFPGQSAFLWQRGRKFLQKHLNASNPSEPATVIFTAAREGKETLKCLSYHVANAYTSSQKVTAVSIDGAERALQDSDTVKLLVDLELSYGFENGHKAAVVHHFESLPAGSTLIFYKYCDHENAAFKDVALVLTVLLEEETLEASVSPRETEEKVRDLLWAKFTDSGTPSSFSHMDSDKLSGLWSRISHLVLPVQPVKNIEERGCLL</sequence>
<keyword id="KW-0256">Endoplasmic reticulum</keyword>
<keyword id="KW-0325">Glycoprotein</keyword>
<keyword id="KW-0472">Membrane</keyword>
<keyword id="KW-0539">Nucleus</keyword>
<keyword id="KW-0597">Phosphoprotein</keyword>
<keyword id="KW-1185">Reference proteome</keyword>
<keyword id="KW-0812">Transmembrane</keyword>
<keyword id="KW-1133">Transmembrane helix</keyword>
<name>TOIP2_RAT</name>